<gene>
    <name evidence="1" type="primary">atpH</name>
    <name type="ordered locus">Bcer98_3828</name>
</gene>
<evidence type="ECO:0000255" key="1">
    <source>
        <dbReference type="HAMAP-Rule" id="MF_01416"/>
    </source>
</evidence>
<reference key="1">
    <citation type="journal article" date="2008" name="Chem. Biol. Interact.">
        <title>Extending the Bacillus cereus group genomics to putative food-borne pathogens of different toxicity.</title>
        <authorList>
            <person name="Lapidus A."/>
            <person name="Goltsman E."/>
            <person name="Auger S."/>
            <person name="Galleron N."/>
            <person name="Segurens B."/>
            <person name="Dossat C."/>
            <person name="Land M.L."/>
            <person name="Broussolle V."/>
            <person name="Brillard J."/>
            <person name="Guinebretiere M.-H."/>
            <person name="Sanchis V."/>
            <person name="Nguen-the C."/>
            <person name="Lereclus D."/>
            <person name="Richardson P."/>
            <person name="Wincker P."/>
            <person name="Weissenbach J."/>
            <person name="Ehrlich S.D."/>
            <person name="Sorokin A."/>
        </authorList>
    </citation>
    <scope>NUCLEOTIDE SEQUENCE [LARGE SCALE GENOMIC DNA]</scope>
    <source>
        <strain>DSM 22905 / CIP 110041 / 391-98 / NVH 391-98</strain>
    </source>
</reference>
<feature type="chain" id="PRO_0000370890" description="ATP synthase subunit delta">
    <location>
        <begin position="1"/>
        <end position="180"/>
    </location>
</feature>
<keyword id="KW-0066">ATP synthesis</keyword>
<keyword id="KW-1003">Cell membrane</keyword>
<keyword id="KW-0139">CF(1)</keyword>
<keyword id="KW-0375">Hydrogen ion transport</keyword>
<keyword id="KW-0406">Ion transport</keyword>
<keyword id="KW-0472">Membrane</keyword>
<keyword id="KW-0813">Transport</keyword>
<dbReference type="EMBL" id="CP000764">
    <property type="protein sequence ID" value="ABS24017.1"/>
    <property type="molecule type" value="Genomic_DNA"/>
</dbReference>
<dbReference type="RefSeq" id="WP_012096275.1">
    <property type="nucleotide sequence ID" value="NC_009674.1"/>
</dbReference>
<dbReference type="SMR" id="A7GV59"/>
<dbReference type="STRING" id="315749.Bcer98_3828"/>
<dbReference type="GeneID" id="33899069"/>
<dbReference type="KEGG" id="bcy:Bcer98_3828"/>
<dbReference type="eggNOG" id="COG0712">
    <property type="taxonomic scope" value="Bacteria"/>
</dbReference>
<dbReference type="HOGENOM" id="CLU_085114_4_1_9"/>
<dbReference type="OrthoDB" id="9802471at2"/>
<dbReference type="Proteomes" id="UP000002300">
    <property type="component" value="Chromosome"/>
</dbReference>
<dbReference type="GO" id="GO:0005886">
    <property type="term" value="C:plasma membrane"/>
    <property type="evidence" value="ECO:0007669"/>
    <property type="project" value="UniProtKB-SubCell"/>
</dbReference>
<dbReference type="GO" id="GO:0045259">
    <property type="term" value="C:proton-transporting ATP synthase complex"/>
    <property type="evidence" value="ECO:0007669"/>
    <property type="project" value="UniProtKB-KW"/>
</dbReference>
<dbReference type="GO" id="GO:0046933">
    <property type="term" value="F:proton-transporting ATP synthase activity, rotational mechanism"/>
    <property type="evidence" value="ECO:0007669"/>
    <property type="project" value="UniProtKB-UniRule"/>
</dbReference>
<dbReference type="Gene3D" id="1.10.520.20">
    <property type="entry name" value="N-terminal domain of the delta subunit of the F1F0-ATP synthase"/>
    <property type="match status" value="1"/>
</dbReference>
<dbReference type="HAMAP" id="MF_01416">
    <property type="entry name" value="ATP_synth_delta_bact"/>
    <property type="match status" value="1"/>
</dbReference>
<dbReference type="InterPro" id="IPR026015">
    <property type="entry name" value="ATP_synth_OSCP/delta_N_sf"/>
</dbReference>
<dbReference type="InterPro" id="IPR020781">
    <property type="entry name" value="ATPase_OSCP/d_CS"/>
</dbReference>
<dbReference type="InterPro" id="IPR000711">
    <property type="entry name" value="ATPase_OSCP/dsu"/>
</dbReference>
<dbReference type="NCBIfam" id="TIGR01145">
    <property type="entry name" value="ATP_synt_delta"/>
    <property type="match status" value="1"/>
</dbReference>
<dbReference type="NCBIfam" id="NF004402">
    <property type="entry name" value="PRK05758.2-2"/>
    <property type="match status" value="1"/>
</dbReference>
<dbReference type="NCBIfam" id="NF004403">
    <property type="entry name" value="PRK05758.2-4"/>
    <property type="match status" value="1"/>
</dbReference>
<dbReference type="PANTHER" id="PTHR11910">
    <property type="entry name" value="ATP SYNTHASE DELTA CHAIN"/>
    <property type="match status" value="1"/>
</dbReference>
<dbReference type="Pfam" id="PF00213">
    <property type="entry name" value="OSCP"/>
    <property type="match status" value="1"/>
</dbReference>
<dbReference type="PRINTS" id="PR00125">
    <property type="entry name" value="ATPASEDELTA"/>
</dbReference>
<dbReference type="SUPFAM" id="SSF47928">
    <property type="entry name" value="N-terminal domain of the delta subunit of the F1F0-ATP synthase"/>
    <property type="match status" value="1"/>
</dbReference>
<dbReference type="PROSITE" id="PS00389">
    <property type="entry name" value="ATPASE_DELTA"/>
    <property type="match status" value="1"/>
</dbReference>
<organism>
    <name type="scientific">Bacillus cytotoxicus (strain DSM 22905 / CIP 110041 / 391-98 / NVH 391-98)</name>
    <dbReference type="NCBI Taxonomy" id="315749"/>
    <lineage>
        <taxon>Bacteria</taxon>
        <taxon>Bacillati</taxon>
        <taxon>Bacillota</taxon>
        <taxon>Bacilli</taxon>
        <taxon>Bacillales</taxon>
        <taxon>Bacillaceae</taxon>
        <taxon>Bacillus</taxon>
        <taxon>Bacillus cereus group</taxon>
    </lineage>
</organism>
<protein>
    <recommendedName>
        <fullName evidence="1">ATP synthase subunit delta</fullName>
    </recommendedName>
    <alternativeName>
        <fullName evidence="1">ATP synthase F(1) sector subunit delta</fullName>
    </alternativeName>
    <alternativeName>
        <fullName evidence="1">F-type ATPase subunit delta</fullName>
        <shortName evidence="1">F-ATPase subunit delta</shortName>
    </alternativeName>
</protein>
<name>ATPD_BACCN</name>
<comment type="function">
    <text evidence="1">F(1)F(0) ATP synthase produces ATP from ADP in the presence of a proton or sodium gradient. F-type ATPases consist of two structural domains, F(1) containing the extramembraneous catalytic core and F(0) containing the membrane proton channel, linked together by a central stalk and a peripheral stalk. During catalysis, ATP synthesis in the catalytic domain of F(1) is coupled via a rotary mechanism of the central stalk subunits to proton translocation.</text>
</comment>
<comment type="function">
    <text evidence="1">This protein is part of the stalk that links CF(0) to CF(1). It either transmits conformational changes from CF(0) to CF(1) or is implicated in proton conduction.</text>
</comment>
<comment type="subunit">
    <text evidence="1">F-type ATPases have 2 components, F(1) - the catalytic core - and F(0) - the membrane proton channel. F(1) has five subunits: alpha(3), beta(3), gamma(1), delta(1), epsilon(1). F(0) has three main subunits: a(1), b(2) and c(10-14). The alpha and beta chains form an alternating ring which encloses part of the gamma chain. F(1) is attached to F(0) by a central stalk formed by the gamma and epsilon chains, while a peripheral stalk is formed by the delta and b chains.</text>
</comment>
<comment type="subcellular location">
    <subcellularLocation>
        <location evidence="1">Cell membrane</location>
        <topology evidence="1">Peripheral membrane protein</topology>
    </subcellularLocation>
</comment>
<comment type="similarity">
    <text evidence="1">Belongs to the ATPase delta chain family.</text>
</comment>
<accession>A7GV59</accession>
<proteinExistence type="inferred from homology"/>
<sequence>MSNEIVAKRYAVALFQIAKEKHVLEMFEEELGLVQSVFMKNEELHSFLTKPNISKEQKKMFLSNVFSSVSESILNTLYILVDNKRIEILPAIANEYVTLANEERNVADATVYSTRLLSEEEKLNIAEAFAKRTGKDAIRVKNIVDEDLLGGIKVRIGNRIYDGSLQGKLARIQRELMKNR</sequence>